<proteinExistence type="inferred from homology"/>
<comment type="function">
    <text evidence="1">Hydrolyzes the pyrophosphate bond of UDP-2,3-diacylglucosamine to yield 2,3-diacylglucosamine 1-phosphate (lipid X) and UMP by catalyzing the attack of water at the alpha-P atom. Involved in the biosynthesis of lipid A, a phosphorylated glycolipid that anchors the lipopolysaccharide to the outer membrane of the cell.</text>
</comment>
<comment type="catalytic activity">
    <reaction evidence="1">
        <text>UDP-2-N,3-O-bis[(3R)-3-hydroxytetradecanoyl]-alpha-D-glucosamine + H2O = 2-N,3-O-bis[(3R)-3-hydroxytetradecanoyl]-alpha-D-glucosaminyl 1-phosphate + UMP + 2 H(+)</text>
        <dbReference type="Rhea" id="RHEA:25213"/>
        <dbReference type="ChEBI" id="CHEBI:15377"/>
        <dbReference type="ChEBI" id="CHEBI:15378"/>
        <dbReference type="ChEBI" id="CHEBI:57865"/>
        <dbReference type="ChEBI" id="CHEBI:57957"/>
        <dbReference type="ChEBI" id="CHEBI:78847"/>
        <dbReference type="EC" id="3.6.1.54"/>
    </reaction>
</comment>
<comment type="cofactor">
    <cofactor evidence="1">
        <name>Mn(2+)</name>
        <dbReference type="ChEBI" id="CHEBI:29035"/>
    </cofactor>
    <text evidence="1">Binds 2 Mn(2+) ions per subunit in a binuclear metal center.</text>
</comment>
<comment type="pathway">
    <text evidence="1">Glycolipid biosynthesis; lipid IV(A) biosynthesis; lipid IV(A) from (3R)-3-hydroxytetradecanoyl-[acyl-carrier-protein] and UDP-N-acetyl-alpha-D-glucosamine: step 4/6.</text>
</comment>
<comment type="subcellular location">
    <subcellularLocation>
        <location evidence="1">Cell inner membrane</location>
        <topology evidence="1">Peripheral membrane protein</topology>
        <orientation evidence="1">Cytoplasmic side</orientation>
    </subcellularLocation>
</comment>
<comment type="similarity">
    <text evidence="1">Belongs to the LpxH family.</text>
</comment>
<organism>
    <name type="scientific">Shewanella frigidimarina (strain NCIMB 400)</name>
    <dbReference type="NCBI Taxonomy" id="318167"/>
    <lineage>
        <taxon>Bacteria</taxon>
        <taxon>Pseudomonadati</taxon>
        <taxon>Pseudomonadota</taxon>
        <taxon>Gammaproteobacteria</taxon>
        <taxon>Alteromonadales</taxon>
        <taxon>Shewanellaceae</taxon>
        <taxon>Shewanella</taxon>
    </lineage>
</organism>
<sequence length="241" mass="27367">MKKTIFVGDLHLSADRPDITQAFIYFLNHGLDNTEALYIIGDLFEVWMGDDIAESFTIAIAEAIKTVSNSIPVYFTHGNRDFMVDKQFCLRAGMKILPEVYCINLYGVNTVILHGDSLCTLDIAYQRFRRFRSLDIVRWVYSHLPKKTRLNIAAKIRQKSVQGNQQKHYEIMDVESSAVTALLASTGCQRMIHGHTHRPAIHQLTAQEQRVVVGDWYTQGSVLNVSEKGCELVTLPFSETN</sequence>
<name>LPXH_SHEFN</name>
<evidence type="ECO:0000255" key="1">
    <source>
        <dbReference type="HAMAP-Rule" id="MF_00575"/>
    </source>
</evidence>
<feature type="chain" id="PRO_1000025083" description="UDP-2,3-diacylglucosamine hydrolase">
    <location>
        <begin position="1"/>
        <end position="241"/>
    </location>
</feature>
<feature type="binding site" evidence="1">
    <location>
        <position position="9"/>
    </location>
    <ligand>
        <name>Mn(2+)</name>
        <dbReference type="ChEBI" id="CHEBI:29035"/>
        <label>1</label>
    </ligand>
</feature>
<feature type="binding site" evidence="1">
    <location>
        <position position="11"/>
    </location>
    <ligand>
        <name>Mn(2+)</name>
        <dbReference type="ChEBI" id="CHEBI:29035"/>
        <label>1</label>
    </ligand>
</feature>
<feature type="binding site" evidence="1">
    <location>
        <position position="42"/>
    </location>
    <ligand>
        <name>Mn(2+)</name>
        <dbReference type="ChEBI" id="CHEBI:29035"/>
        <label>1</label>
    </ligand>
</feature>
<feature type="binding site" evidence="1">
    <location>
        <position position="42"/>
    </location>
    <ligand>
        <name>Mn(2+)</name>
        <dbReference type="ChEBI" id="CHEBI:29035"/>
        <label>2</label>
    </ligand>
</feature>
<feature type="binding site" evidence="1">
    <location>
        <begin position="79"/>
        <end position="80"/>
    </location>
    <ligand>
        <name>substrate</name>
    </ligand>
</feature>
<feature type="binding site" evidence="1">
    <location>
        <position position="79"/>
    </location>
    <ligand>
        <name>Mn(2+)</name>
        <dbReference type="ChEBI" id="CHEBI:29035"/>
        <label>2</label>
    </ligand>
</feature>
<feature type="binding site" evidence="1">
    <location>
        <position position="114"/>
    </location>
    <ligand>
        <name>Mn(2+)</name>
        <dbReference type="ChEBI" id="CHEBI:29035"/>
        <label>2</label>
    </ligand>
</feature>
<feature type="binding site" evidence="1">
    <location>
        <position position="122"/>
    </location>
    <ligand>
        <name>substrate</name>
    </ligand>
</feature>
<feature type="binding site" evidence="1">
    <location>
        <position position="160"/>
    </location>
    <ligand>
        <name>substrate</name>
    </ligand>
</feature>
<feature type="binding site" evidence="1">
    <location>
        <position position="164"/>
    </location>
    <ligand>
        <name>substrate</name>
    </ligand>
</feature>
<feature type="binding site" evidence="1">
    <location>
        <position position="167"/>
    </location>
    <ligand>
        <name>substrate</name>
    </ligand>
</feature>
<feature type="binding site" evidence="1">
    <location>
        <position position="195"/>
    </location>
    <ligand>
        <name>Mn(2+)</name>
        <dbReference type="ChEBI" id="CHEBI:29035"/>
        <label>2</label>
    </ligand>
</feature>
<feature type="binding site" evidence="1">
    <location>
        <position position="195"/>
    </location>
    <ligand>
        <name>substrate</name>
    </ligand>
</feature>
<feature type="binding site" evidence="1">
    <location>
        <position position="197"/>
    </location>
    <ligand>
        <name>Mn(2+)</name>
        <dbReference type="ChEBI" id="CHEBI:29035"/>
        <label>1</label>
    </ligand>
</feature>
<gene>
    <name evidence="1" type="primary">lpxH</name>
    <name type="ordered locus">Sfri_2601</name>
</gene>
<reference key="1">
    <citation type="submission" date="2006-08" db="EMBL/GenBank/DDBJ databases">
        <title>Complete sequence of Shewanella frigidimarina NCIMB 400.</title>
        <authorList>
            <consortium name="US DOE Joint Genome Institute"/>
            <person name="Copeland A."/>
            <person name="Lucas S."/>
            <person name="Lapidus A."/>
            <person name="Barry K."/>
            <person name="Detter J.C."/>
            <person name="Glavina del Rio T."/>
            <person name="Hammon N."/>
            <person name="Israni S."/>
            <person name="Dalin E."/>
            <person name="Tice H."/>
            <person name="Pitluck S."/>
            <person name="Fredrickson J.K."/>
            <person name="Kolker E."/>
            <person name="McCuel L.A."/>
            <person name="DiChristina T."/>
            <person name="Nealson K.H."/>
            <person name="Newman D."/>
            <person name="Tiedje J.M."/>
            <person name="Zhou J."/>
            <person name="Romine M.F."/>
            <person name="Culley D.E."/>
            <person name="Serres M."/>
            <person name="Chertkov O."/>
            <person name="Brettin T."/>
            <person name="Bruce D."/>
            <person name="Han C."/>
            <person name="Tapia R."/>
            <person name="Gilna P."/>
            <person name="Schmutz J."/>
            <person name="Larimer F."/>
            <person name="Land M."/>
            <person name="Hauser L."/>
            <person name="Kyrpides N."/>
            <person name="Mikhailova N."/>
            <person name="Richardson P."/>
        </authorList>
    </citation>
    <scope>NUCLEOTIDE SEQUENCE [LARGE SCALE GENOMIC DNA]</scope>
    <source>
        <strain>NCIMB 400</strain>
    </source>
</reference>
<accession>Q07ZX3</accession>
<protein>
    <recommendedName>
        <fullName evidence="1">UDP-2,3-diacylglucosamine hydrolase</fullName>
        <ecNumber evidence="1">3.6.1.54</ecNumber>
    </recommendedName>
    <alternativeName>
        <fullName evidence="1">UDP-2,3-diacylglucosamine diphosphatase</fullName>
    </alternativeName>
</protein>
<keyword id="KW-0997">Cell inner membrane</keyword>
<keyword id="KW-1003">Cell membrane</keyword>
<keyword id="KW-0378">Hydrolase</keyword>
<keyword id="KW-0441">Lipid A biosynthesis</keyword>
<keyword id="KW-0444">Lipid biosynthesis</keyword>
<keyword id="KW-0443">Lipid metabolism</keyword>
<keyword id="KW-0464">Manganese</keyword>
<keyword id="KW-0472">Membrane</keyword>
<keyword id="KW-0479">Metal-binding</keyword>
<keyword id="KW-1185">Reference proteome</keyword>
<dbReference type="EC" id="3.6.1.54" evidence="1"/>
<dbReference type="EMBL" id="CP000447">
    <property type="protein sequence ID" value="ABI72442.1"/>
    <property type="molecule type" value="Genomic_DNA"/>
</dbReference>
<dbReference type="RefSeq" id="WP_011638051.1">
    <property type="nucleotide sequence ID" value="NC_008345.1"/>
</dbReference>
<dbReference type="SMR" id="Q07ZX3"/>
<dbReference type="STRING" id="318167.Sfri_2601"/>
<dbReference type="KEGG" id="sfr:Sfri_2601"/>
<dbReference type="eggNOG" id="COG2908">
    <property type="taxonomic scope" value="Bacteria"/>
</dbReference>
<dbReference type="HOGENOM" id="CLU_074586_0_0_6"/>
<dbReference type="OrthoDB" id="9783283at2"/>
<dbReference type="UniPathway" id="UPA00359">
    <property type="reaction ID" value="UER00480"/>
</dbReference>
<dbReference type="Proteomes" id="UP000000684">
    <property type="component" value="Chromosome"/>
</dbReference>
<dbReference type="GO" id="GO:0005737">
    <property type="term" value="C:cytoplasm"/>
    <property type="evidence" value="ECO:0007669"/>
    <property type="project" value="InterPro"/>
</dbReference>
<dbReference type="GO" id="GO:0019897">
    <property type="term" value="C:extrinsic component of plasma membrane"/>
    <property type="evidence" value="ECO:0007669"/>
    <property type="project" value="UniProtKB-UniRule"/>
</dbReference>
<dbReference type="GO" id="GO:0030145">
    <property type="term" value="F:manganese ion binding"/>
    <property type="evidence" value="ECO:0007669"/>
    <property type="project" value="UniProtKB-UniRule"/>
</dbReference>
<dbReference type="GO" id="GO:0008758">
    <property type="term" value="F:UDP-2,3-diacylglucosamine hydrolase activity"/>
    <property type="evidence" value="ECO:0007669"/>
    <property type="project" value="UniProtKB-UniRule"/>
</dbReference>
<dbReference type="GO" id="GO:0009245">
    <property type="term" value="P:lipid A biosynthetic process"/>
    <property type="evidence" value="ECO:0007669"/>
    <property type="project" value="UniProtKB-UniRule"/>
</dbReference>
<dbReference type="CDD" id="cd07398">
    <property type="entry name" value="MPP_YbbF-LpxH"/>
    <property type="match status" value="1"/>
</dbReference>
<dbReference type="Gene3D" id="3.60.21.10">
    <property type="match status" value="1"/>
</dbReference>
<dbReference type="HAMAP" id="MF_00575">
    <property type="entry name" value="LpxH"/>
    <property type="match status" value="1"/>
</dbReference>
<dbReference type="InterPro" id="IPR004843">
    <property type="entry name" value="Calcineurin-like_PHP_ApaH"/>
</dbReference>
<dbReference type="InterPro" id="IPR043461">
    <property type="entry name" value="LpxH-like"/>
</dbReference>
<dbReference type="InterPro" id="IPR029052">
    <property type="entry name" value="Metallo-depent_PP-like"/>
</dbReference>
<dbReference type="InterPro" id="IPR010138">
    <property type="entry name" value="UDP-diacylglucosamine_Hdrlase"/>
</dbReference>
<dbReference type="NCBIfam" id="TIGR01854">
    <property type="entry name" value="lipid_A_lpxH"/>
    <property type="match status" value="1"/>
</dbReference>
<dbReference type="NCBIfam" id="NF003743">
    <property type="entry name" value="PRK05340.1"/>
    <property type="match status" value="1"/>
</dbReference>
<dbReference type="PANTHER" id="PTHR34990:SF1">
    <property type="entry name" value="UDP-2,3-DIACYLGLUCOSAMINE HYDROLASE"/>
    <property type="match status" value="1"/>
</dbReference>
<dbReference type="PANTHER" id="PTHR34990">
    <property type="entry name" value="UDP-2,3-DIACYLGLUCOSAMINE HYDROLASE-RELATED"/>
    <property type="match status" value="1"/>
</dbReference>
<dbReference type="Pfam" id="PF00149">
    <property type="entry name" value="Metallophos"/>
    <property type="match status" value="1"/>
</dbReference>
<dbReference type="SUPFAM" id="SSF56300">
    <property type="entry name" value="Metallo-dependent phosphatases"/>
    <property type="match status" value="1"/>
</dbReference>